<evidence type="ECO:0000255" key="1">
    <source>
        <dbReference type="HAMAP-Rule" id="MF_01592"/>
    </source>
</evidence>
<organism>
    <name type="scientific">Salmonella choleraesuis (strain SC-B67)</name>
    <dbReference type="NCBI Taxonomy" id="321314"/>
    <lineage>
        <taxon>Bacteria</taxon>
        <taxon>Pseudomonadati</taxon>
        <taxon>Pseudomonadota</taxon>
        <taxon>Gammaproteobacteria</taxon>
        <taxon>Enterobacterales</taxon>
        <taxon>Enterobacteriaceae</taxon>
        <taxon>Salmonella</taxon>
    </lineage>
</organism>
<reference key="1">
    <citation type="journal article" date="2005" name="Nucleic Acids Res.">
        <title>The genome sequence of Salmonella enterica serovar Choleraesuis, a highly invasive and resistant zoonotic pathogen.</title>
        <authorList>
            <person name="Chiu C.-H."/>
            <person name="Tang P."/>
            <person name="Chu C."/>
            <person name="Hu S."/>
            <person name="Bao Q."/>
            <person name="Yu J."/>
            <person name="Chou Y.-Y."/>
            <person name="Wang H.-S."/>
            <person name="Lee Y.-S."/>
        </authorList>
    </citation>
    <scope>NUCLEOTIDE SEQUENCE [LARGE SCALE GENOMIC DNA]</scope>
    <source>
        <strain>SC-B67</strain>
    </source>
</reference>
<dbReference type="EC" id="3.6.1.-" evidence="1"/>
<dbReference type="EMBL" id="AE017220">
    <property type="protein sequence ID" value="AAX65725.1"/>
    <property type="molecule type" value="Genomic_DNA"/>
</dbReference>
<dbReference type="RefSeq" id="WP_000381544.1">
    <property type="nucleotide sequence ID" value="NC_006905.1"/>
</dbReference>
<dbReference type="SMR" id="Q57NI6"/>
<dbReference type="KEGG" id="sec:SCH_1819"/>
<dbReference type="HOGENOM" id="CLU_040940_5_2_6"/>
<dbReference type="Proteomes" id="UP000000538">
    <property type="component" value="Chromosome"/>
</dbReference>
<dbReference type="GO" id="GO:0010945">
    <property type="term" value="F:coenzyme A diphosphatase activity"/>
    <property type="evidence" value="ECO:0007669"/>
    <property type="project" value="InterPro"/>
</dbReference>
<dbReference type="GO" id="GO:0000287">
    <property type="term" value="F:magnesium ion binding"/>
    <property type="evidence" value="ECO:0007669"/>
    <property type="project" value="UniProtKB-UniRule"/>
</dbReference>
<dbReference type="GO" id="GO:0030145">
    <property type="term" value="F:manganese ion binding"/>
    <property type="evidence" value="ECO:0007669"/>
    <property type="project" value="UniProtKB-UniRule"/>
</dbReference>
<dbReference type="GO" id="GO:0009132">
    <property type="term" value="P:nucleoside diphosphate metabolic process"/>
    <property type="evidence" value="ECO:0007669"/>
    <property type="project" value="InterPro"/>
</dbReference>
<dbReference type="CDD" id="cd03426">
    <property type="entry name" value="NUDIX_CoAse_Nudt7"/>
    <property type="match status" value="1"/>
</dbReference>
<dbReference type="Gene3D" id="3.90.79.10">
    <property type="entry name" value="Nucleoside Triphosphate Pyrophosphohydrolase"/>
    <property type="match status" value="1"/>
</dbReference>
<dbReference type="HAMAP" id="MF_01592">
    <property type="entry name" value="Nudix_NudL"/>
    <property type="match status" value="1"/>
</dbReference>
<dbReference type="InterPro" id="IPR045121">
    <property type="entry name" value="CoAse"/>
</dbReference>
<dbReference type="InterPro" id="IPR015797">
    <property type="entry name" value="NUDIX_hydrolase-like_dom_sf"/>
</dbReference>
<dbReference type="InterPro" id="IPR000086">
    <property type="entry name" value="NUDIX_hydrolase_dom"/>
</dbReference>
<dbReference type="InterPro" id="IPR000059">
    <property type="entry name" value="NUDIX_hydrolase_NudL_CS"/>
</dbReference>
<dbReference type="InterPro" id="IPR023735">
    <property type="entry name" value="Nudix_NudL"/>
</dbReference>
<dbReference type="NCBIfam" id="NF007980">
    <property type="entry name" value="PRK10707.1"/>
    <property type="match status" value="1"/>
</dbReference>
<dbReference type="PANTHER" id="PTHR12992:SF11">
    <property type="entry name" value="MITOCHONDRIAL COENZYME A DIPHOSPHATASE NUDT8"/>
    <property type="match status" value="1"/>
</dbReference>
<dbReference type="PANTHER" id="PTHR12992">
    <property type="entry name" value="NUDIX HYDROLASE"/>
    <property type="match status" value="1"/>
</dbReference>
<dbReference type="Pfam" id="PF00293">
    <property type="entry name" value="NUDIX"/>
    <property type="match status" value="1"/>
</dbReference>
<dbReference type="SUPFAM" id="SSF55811">
    <property type="entry name" value="Nudix"/>
    <property type="match status" value="1"/>
</dbReference>
<dbReference type="PROSITE" id="PS51462">
    <property type="entry name" value="NUDIX"/>
    <property type="match status" value="1"/>
</dbReference>
<dbReference type="PROSITE" id="PS01293">
    <property type="entry name" value="NUDIX_COA"/>
    <property type="match status" value="1"/>
</dbReference>
<sequence length="192" mass="21431">MDTSRLTLDHFLSRFQLLRPQMTHETLNQRQAAVLIPVVRRPQPGLLLTQRAIHLRKHAGQVAFPGGAVDSTDASLIAAALREAQEEVAIPPQAVEVIGVLPPVDSVTGFQVTPVVGIIPPNLPWRASEDEVSAVFEMPLAQALQLGRYHPLDVYRRGNSHRVWLSWYEHYFVWGMTANILRELALQIGVKP</sequence>
<keyword id="KW-0378">Hydrolase</keyword>
<keyword id="KW-0460">Magnesium</keyword>
<keyword id="KW-0464">Manganese</keyword>
<keyword id="KW-0479">Metal-binding</keyword>
<name>NUDL_SALCH</name>
<protein>
    <recommendedName>
        <fullName evidence="1">Uncharacterized Nudix hydrolase NudL</fullName>
        <ecNumber evidence="1">3.6.1.-</ecNumber>
    </recommendedName>
</protein>
<feature type="chain" id="PRO_0000315581" description="Uncharacterized Nudix hydrolase NudL">
    <location>
        <begin position="1"/>
        <end position="192"/>
    </location>
</feature>
<feature type="domain" description="Nudix hydrolase" evidence="1">
    <location>
        <begin position="29"/>
        <end position="160"/>
    </location>
</feature>
<feature type="short sequence motif" description="Nudix box">
    <location>
        <begin position="67"/>
        <end position="89"/>
    </location>
</feature>
<feature type="binding site" evidence="1">
    <location>
        <position position="83"/>
    </location>
    <ligand>
        <name>Mg(2+)</name>
        <dbReference type="ChEBI" id="CHEBI:18420"/>
    </ligand>
</feature>
<feature type="binding site" evidence="1">
    <location>
        <position position="87"/>
    </location>
    <ligand>
        <name>Mg(2+)</name>
        <dbReference type="ChEBI" id="CHEBI:18420"/>
    </ligand>
</feature>
<accession>Q57NI6</accession>
<comment type="function">
    <text evidence="1">Probably mediates the hydrolysis of some nucleoside diphosphate derivatives.</text>
</comment>
<comment type="cofactor">
    <cofactor evidence="1">
        <name>Mn(2+)</name>
        <dbReference type="ChEBI" id="CHEBI:29035"/>
    </cofactor>
    <cofactor evidence="1">
        <name>Mg(2+)</name>
        <dbReference type="ChEBI" id="CHEBI:18420"/>
    </cofactor>
</comment>
<comment type="similarity">
    <text evidence="1">Belongs to the Nudix hydrolase family. PCD1 subfamily.</text>
</comment>
<gene>
    <name evidence="1" type="primary">nudL</name>
    <name type="ordered locus">SCH_1819</name>
</gene>
<proteinExistence type="inferred from homology"/>